<gene>
    <name type="ordered locus">Pput_4869</name>
</gene>
<protein>
    <recommendedName>
        <fullName evidence="1">UPF0301 protein Pput_4869</fullName>
    </recommendedName>
</protein>
<name>Y4869_PSEP1</name>
<comment type="similarity">
    <text evidence="1">Belongs to the UPF0301 (AlgH) family.</text>
</comment>
<proteinExistence type="inferred from homology"/>
<evidence type="ECO:0000255" key="1">
    <source>
        <dbReference type="HAMAP-Rule" id="MF_00758"/>
    </source>
</evidence>
<sequence length="189" mass="20229">MKTLAPSYLKHQFLIAMPHMADPNFAQTLTYIVEHNEHGAMGLVVNRPQELSLADILEQLRPDETPPASTLQVPIYQGGPVQTDRGFVLHSSECSFQASVALEGLSLTTSQDILLAIAAGVGPKQSLITLGYAGWEAGQLEAELADNAWLNCPFDPEIVFGMASDLRLEAAAASLGINLHLLTSQAGHA</sequence>
<feature type="chain" id="PRO_1000062198" description="UPF0301 protein Pput_4869">
    <location>
        <begin position="1"/>
        <end position="189"/>
    </location>
</feature>
<organism>
    <name type="scientific">Pseudomonas putida (strain ATCC 700007 / DSM 6899 / JCM 31910 / BCRC 17059 / LMG 24140 / F1)</name>
    <dbReference type="NCBI Taxonomy" id="351746"/>
    <lineage>
        <taxon>Bacteria</taxon>
        <taxon>Pseudomonadati</taxon>
        <taxon>Pseudomonadota</taxon>
        <taxon>Gammaproteobacteria</taxon>
        <taxon>Pseudomonadales</taxon>
        <taxon>Pseudomonadaceae</taxon>
        <taxon>Pseudomonas</taxon>
    </lineage>
</organism>
<reference key="1">
    <citation type="submission" date="2007-05" db="EMBL/GenBank/DDBJ databases">
        <title>Complete sequence of Pseudomonas putida F1.</title>
        <authorList>
            <consortium name="US DOE Joint Genome Institute"/>
            <person name="Copeland A."/>
            <person name="Lucas S."/>
            <person name="Lapidus A."/>
            <person name="Barry K."/>
            <person name="Detter J.C."/>
            <person name="Glavina del Rio T."/>
            <person name="Hammon N."/>
            <person name="Israni S."/>
            <person name="Dalin E."/>
            <person name="Tice H."/>
            <person name="Pitluck S."/>
            <person name="Chain P."/>
            <person name="Malfatti S."/>
            <person name="Shin M."/>
            <person name="Vergez L."/>
            <person name="Schmutz J."/>
            <person name="Larimer F."/>
            <person name="Land M."/>
            <person name="Hauser L."/>
            <person name="Kyrpides N."/>
            <person name="Lykidis A."/>
            <person name="Parales R."/>
            <person name="Richardson P."/>
        </authorList>
    </citation>
    <scope>NUCLEOTIDE SEQUENCE [LARGE SCALE GENOMIC DNA]</scope>
    <source>
        <strain>ATCC 700007 / DSM 6899 / JCM 31910 / BCRC 17059 / LMG 24140 / F1</strain>
    </source>
</reference>
<dbReference type="EMBL" id="CP000712">
    <property type="protein sequence ID" value="ABQ80989.1"/>
    <property type="molecule type" value="Genomic_DNA"/>
</dbReference>
<dbReference type="SMR" id="A5WA29"/>
<dbReference type="KEGG" id="ppf:Pput_4869"/>
<dbReference type="eggNOG" id="COG1678">
    <property type="taxonomic scope" value="Bacteria"/>
</dbReference>
<dbReference type="HOGENOM" id="CLU_057596_1_0_6"/>
<dbReference type="GO" id="GO:0005829">
    <property type="term" value="C:cytosol"/>
    <property type="evidence" value="ECO:0007669"/>
    <property type="project" value="TreeGrafter"/>
</dbReference>
<dbReference type="Gene3D" id="3.40.1740.10">
    <property type="entry name" value="VC0467-like"/>
    <property type="match status" value="1"/>
</dbReference>
<dbReference type="HAMAP" id="MF_00758">
    <property type="entry name" value="UPF0301"/>
    <property type="match status" value="1"/>
</dbReference>
<dbReference type="InterPro" id="IPR003774">
    <property type="entry name" value="AlgH-like"/>
</dbReference>
<dbReference type="NCBIfam" id="NF001266">
    <property type="entry name" value="PRK00228.1-1"/>
    <property type="match status" value="1"/>
</dbReference>
<dbReference type="PANTHER" id="PTHR30327">
    <property type="entry name" value="UNCHARACTERIZED PROTEIN YQGE"/>
    <property type="match status" value="1"/>
</dbReference>
<dbReference type="PANTHER" id="PTHR30327:SF1">
    <property type="entry name" value="UPF0301 PROTEIN YQGE"/>
    <property type="match status" value="1"/>
</dbReference>
<dbReference type="Pfam" id="PF02622">
    <property type="entry name" value="DUF179"/>
    <property type="match status" value="1"/>
</dbReference>
<dbReference type="SUPFAM" id="SSF143456">
    <property type="entry name" value="VC0467-like"/>
    <property type="match status" value="1"/>
</dbReference>
<accession>A5WA29</accession>